<gene>
    <name evidence="1" type="primary">rpsQ</name>
    <name type="ordered locus">ETA_31540</name>
</gene>
<protein>
    <recommendedName>
        <fullName evidence="1">Small ribosomal subunit protein uS17</fullName>
    </recommendedName>
    <alternativeName>
        <fullName evidence="2">30S ribosomal protein S17</fullName>
    </alternativeName>
</protein>
<keyword id="KW-1185">Reference proteome</keyword>
<keyword id="KW-0687">Ribonucleoprotein</keyword>
<keyword id="KW-0689">Ribosomal protein</keyword>
<keyword id="KW-0694">RNA-binding</keyword>
<keyword id="KW-0699">rRNA-binding</keyword>
<accession>B2VK55</accession>
<organism>
    <name type="scientific">Erwinia tasmaniensis (strain DSM 17950 / CFBP 7177 / CIP 109463 / NCPPB 4357 / Et1/99)</name>
    <dbReference type="NCBI Taxonomy" id="465817"/>
    <lineage>
        <taxon>Bacteria</taxon>
        <taxon>Pseudomonadati</taxon>
        <taxon>Pseudomonadota</taxon>
        <taxon>Gammaproteobacteria</taxon>
        <taxon>Enterobacterales</taxon>
        <taxon>Erwiniaceae</taxon>
        <taxon>Erwinia</taxon>
    </lineage>
</organism>
<proteinExistence type="inferred from homology"/>
<reference key="1">
    <citation type="journal article" date="2008" name="Environ. Microbiol.">
        <title>The genome of Erwinia tasmaniensis strain Et1/99, a non-pathogenic bacterium in the genus Erwinia.</title>
        <authorList>
            <person name="Kube M."/>
            <person name="Migdoll A.M."/>
            <person name="Mueller I."/>
            <person name="Kuhl H."/>
            <person name="Beck A."/>
            <person name="Reinhardt R."/>
            <person name="Geider K."/>
        </authorList>
    </citation>
    <scope>NUCLEOTIDE SEQUENCE [LARGE SCALE GENOMIC DNA]</scope>
    <source>
        <strain>DSM 17950 / CFBP 7177 / CIP 109463 / NCPPB 4357 / Et1/99</strain>
    </source>
</reference>
<sequence length="84" mass="9704">MTDKIRTLQGRVTSDKMEKSIVVAIERFVKHPIYGKFIKRTTKLHVHDENNECGIGDVVIIRECRPLSKTKSWTLVRVVEKAIL</sequence>
<dbReference type="EMBL" id="CU468135">
    <property type="protein sequence ID" value="CAO98200.1"/>
    <property type="molecule type" value="Genomic_DNA"/>
</dbReference>
<dbReference type="RefSeq" id="WP_004160584.1">
    <property type="nucleotide sequence ID" value="NC_010694.1"/>
</dbReference>
<dbReference type="SMR" id="B2VK55"/>
<dbReference type="STRING" id="465817.ETA_31540"/>
<dbReference type="GeneID" id="97604573"/>
<dbReference type="KEGG" id="eta:ETA_31540"/>
<dbReference type="eggNOG" id="COG0186">
    <property type="taxonomic scope" value="Bacteria"/>
</dbReference>
<dbReference type="HOGENOM" id="CLU_073626_1_1_6"/>
<dbReference type="OrthoDB" id="9811714at2"/>
<dbReference type="Proteomes" id="UP000001726">
    <property type="component" value="Chromosome"/>
</dbReference>
<dbReference type="GO" id="GO:0022627">
    <property type="term" value="C:cytosolic small ribosomal subunit"/>
    <property type="evidence" value="ECO:0007669"/>
    <property type="project" value="TreeGrafter"/>
</dbReference>
<dbReference type="GO" id="GO:0019843">
    <property type="term" value="F:rRNA binding"/>
    <property type="evidence" value="ECO:0007669"/>
    <property type="project" value="UniProtKB-UniRule"/>
</dbReference>
<dbReference type="GO" id="GO:0003735">
    <property type="term" value="F:structural constituent of ribosome"/>
    <property type="evidence" value="ECO:0007669"/>
    <property type="project" value="InterPro"/>
</dbReference>
<dbReference type="GO" id="GO:0006412">
    <property type="term" value="P:translation"/>
    <property type="evidence" value="ECO:0007669"/>
    <property type="project" value="UniProtKB-UniRule"/>
</dbReference>
<dbReference type="CDD" id="cd00364">
    <property type="entry name" value="Ribosomal_uS17"/>
    <property type="match status" value="1"/>
</dbReference>
<dbReference type="FunFam" id="2.40.50.140:FF:000014">
    <property type="entry name" value="30S ribosomal protein S17"/>
    <property type="match status" value="1"/>
</dbReference>
<dbReference type="Gene3D" id="2.40.50.140">
    <property type="entry name" value="Nucleic acid-binding proteins"/>
    <property type="match status" value="1"/>
</dbReference>
<dbReference type="HAMAP" id="MF_01345_B">
    <property type="entry name" value="Ribosomal_uS17_B"/>
    <property type="match status" value="1"/>
</dbReference>
<dbReference type="InterPro" id="IPR012340">
    <property type="entry name" value="NA-bd_OB-fold"/>
</dbReference>
<dbReference type="InterPro" id="IPR000266">
    <property type="entry name" value="Ribosomal_uS17"/>
</dbReference>
<dbReference type="InterPro" id="IPR019984">
    <property type="entry name" value="Ribosomal_uS17_bact/chlr"/>
</dbReference>
<dbReference type="InterPro" id="IPR019979">
    <property type="entry name" value="Ribosomal_uS17_CS"/>
</dbReference>
<dbReference type="NCBIfam" id="NF004123">
    <property type="entry name" value="PRK05610.1"/>
    <property type="match status" value="1"/>
</dbReference>
<dbReference type="NCBIfam" id="TIGR03635">
    <property type="entry name" value="uS17_bact"/>
    <property type="match status" value="1"/>
</dbReference>
<dbReference type="PANTHER" id="PTHR10744">
    <property type="entry name" value="40S RIBOSOMAL PROTEIN S11 FAMILY MEMBER"/>
    <property type="match status" value="1"/>
</dbReference>
<dbReference type="PANTHER" id="PTHR10744:SF1">
    <property type="entry name" value="SMALL RIBOSOMAL SUBUNIT PROTEIN US17M"/>
    <property type="match status" value="1"/>
</dbReference>
<dbReference type="Pfam" id="PF00366">
    <property type="entry name" value="Ribosomal_S17"/>
    <property type="match status" value="1"/>
</dbReference>
<dbReference type="PRINTS" id="PR00973">
    <property type="entry name" value="RIBOSOMALS17"/>
</dbReference>
<dbReference type="SUPFAM" id="SSF50249">
    <property type="entry name" value="Nucleic acid-binding proteins"/>
    <property type="match status" value="1"/>
</dbReference>
<dbReference type="PROSITE" id="PS00056">
    <property type="entry name" value="RIBOSOMAL_S17"/>
    <property type="match status" value="1"/>
</dbReference>
<comment type="function">
    <text evidence="1">One of the primary rRNA binding proteins, it binds specifically to the 5'-end of 16S ribosomal RNA.</text>
</comment>
<comment type="subunit">
    <text evidence="1">Part of the 30S ribosomal subunit.</text>
</comment>
<comment type="similarity">
    <text evidence="1">Belongs to the universal ribosomal protein uS17 family.</text>
</comment>
<feature type="chain" id="PRO_1000143257" description="Small ribosomal subunit protein uS17">
    <location>
        <begin position="1"/>
        <end position="84"/>
    </location>
</feature>
<name>RS17_ERWT9</name>
<evidence type="ECO:0000255" key="1">
    <source>
        <dbReference type="HAMAP-Rule" id="MF_01345"/>
    </source>
</evidence>
<evidence type="ECO:0000305" key="2"/>